<gene>
    <name type="ordered locus">SACOL1445</name>
</gene>
<keyword id="KW-0067">ATP-binding</keyword>
<keyword id="KW-0547">Nucleotide-binding</keyword>
<reference key="1">
    <citation type="journal article" date="2005" name="J. Bacteriol.">
        <title>Insights on evolution of virulence and resistance from the complete genome analysis of an early methicillin-resistant Staphylococcus aureus strain and a biofilm-producing methicillin-resistant Staphylococcus epidermidis strain.</title>
        <authorList>
            <person name="Gill S.R."/>
            <person name="Fouts D.E."/>
            <person name="Archer G.L."/>
            <person name="Mongodin E.F."/>
            <person name="DeBoy R.T."/>
            <person name="Ravel J."/>
            <person name="Paulsen I.T."/>
            <person name="Kolonay J.F."/>
            <person name="Brinkac L.M."/>
            <person name="Beanan M.J."/>
            <person name="Dodson R.J."/>
            <person name="Daugherty S.C."/>
            <person name="Madupu R."/>
            <person name="Angiuoli S.V."/>
            <person name="Durkin A.S."/>
            <person name="Haft D.H."/>
            <person name="Vamathevan J.J."/>
            <person name="Khouri H."/>
            <person name="Utterback T.R."/>
            <person name="Lee C."/>
            <person name="Dimitrov G."/>
            <person name="Jiang L."/>
            <person name="Qin H."/>
            <person name="Weidman J."/>
            <person name="Tran K."/>
            <person name="Kang K.H."/>
            <person name="Hance I.R."/>
            <person name="Nelson K.E."/>
            <person name="Fraser C.M."/>
        </authorList>
    </citation>
    <scope>NUCLEOTIDE SEQUENCE [LARGE SCALE GENOMIC DNA]</scope>
    <source>
        <strain>COL</strain>
    </source>
</reference>
<sequence>MALKHYKNSDSTVFNDAKALFDLNKNILLKGPTGSGKTKLAETLSEVVDTPMHQVNCSVDLDTESLLGFKTIKTNAEGQQEIVFVDGPVIKAMKEGHILYIDEINMAKPETLPVLNGVLDYRRQITNPYTGEVIKAVPGFNVIAAINEGYVGTLPMNEALKNRFVVIHVDYIDGDILKNVIKEQSLLQDDKQIEQIIKFNEDLRTMSKQGQISEEAASIRALLDLCDLITVMPVERAIKRTIIDKLEDEREQQAIYNAVELNF</sequence>
<evidence type="ECO:0000255" key="1"/>
<evidence type="ECO:0000305" key="2"/>
<organism>
    <name type="scientific">Staphylococcus aureus (strain COL)</name>
    <dbReference type="NCBI Taxonomy" id="93062"/>
    <lineage>
        <taxon>Bacteria</taxon>
        <taxon>Bacillati</taxon>
        <taxon>Bacillota</taxon>
        <taxon>Bacilli</taxon>
        <taxon>Bacillales</taxon>
        <taxon>Staphylococcaceae</taxon>
        <taxon>Staphylococcus</taxon>
    </lineage>
</organism>
<proteinExistence type="inferred from homology"/>
<protein>
    <recommendedName>
        <fullName>Uncharacterized protein SACOL1445</fullName>
    </recommendedName>
</protein>
<dbReference type="EMBL" id="CP000046">
    <property type="protein sequence ID" value="AAW38190.1"/>
    <property type="molecule type" value="Genomic_DNA"/>
</dbReference>
<dbReference type="RefSeq" id="WP_001185421.1">
    <property type="nucleotide sequence ID" value="NZ_JBGOFO010000003.1"/>
</dbReference>
<dbReference type="SMR" id="Q5HG10"/>
<dbReference type="KEGG" id="sac:SACOL1445"/>
<dbReference type="HOGENOM" id="CLU_080347_0_0_9"/>
<dbReference type="Proteomes" id="UP000000530">
    <property type="component" value="Chromosome"/>
</dbReference>
<dbReference type="GO" id="GO:0005524">
    <property type="term" value="F:ATP binding"/>
    <property type="evidence" value="ECO:0007669"/>
    <property type="project" value="UniProtKB-KW"/>
</dbReference>
<dbReference type="GO" id="GO:0016887">
    <property type="term" value="F:ATP hydrolysis activity"/>
    <property type="evidence" value="ECO:0007669"/>
    <property type="project" value="InterPro"/>
</dbReference>
<dbReference type="CDD" id="cd00009">
    <property type="entry name" value="AAA"/>
    <property type="match status" value="1"/>
</dbReference>
<dbReference type="Gene3D" id="3.40.50.300">
    <property type="entry name" value="P-loop containing nucleotide triphosphate hydrolases"/>
    <property type="match status" value="1"/>
</dbReference>
<dbReference type="InterPro" id="IPR011704">
    <property type="entry name" value="ATPase_dyneun-rel_AAA"/>
</dbReference>
<dbReference type="InterPro" id="IPR050764">
    <property type="entry name" value="CbbQ/NirQ/NorQ/GpvN"/>
</dbReference>
<dbReference type="InterPro" id="IPR013615">
    <property type="entry name" value="CbbQ_C"/>
</dbReference>
<dbReference type="InterPro" id="IPR001270">
    <property type="entry name" value="ClpA/B"/>
</dbReference>
<dbReference type="InterPro" id="IPR027417">
    <property type="entry name" value="P-loop_NTPase"/>
</dbReference>
<dbReference type="PANTHER" id="PTHR42759:SF1">
    <property type="entry name" value="MAGNESIUM-CHELATASE SUBUNIT CHLD"/>
    <property type="match status" value="1"/>
</dbReference>
<dbReference type="PANTHER" id="PTHR42759">
    <property type="entry name" value="MOXR FAMILY PROTEIN"/>
    <property type="match status" value="1"/>
</dbReference>
<dbReference type="Pfam" id="PF07728">
    <property type="entry name" value="AAA_5"/>
    <property type="match status" value="1"/>
</dbReference>
<dbReference type="Pfam" id="PF08406">
    <property type="entry name" value="CbbQ_C"/>
    <property type="match status" value="1"/>
</dbReference>
<dbReference type="PRINTS" id="PR00300">
    <property type="entry name" value="CLPPROTEASEA"/>
</dbReference>
<dbReference type="SUPFAM" id="SSF52540">
    <property type="entry name" value="P-loop containing nucleoside triphosphate hydrolases"/>
    <property type="match status" value="1"/>
</dbReference>
<name>Y1445_STAAC</name>
<accession>Q5HG10</accession>
<comment type="similarity">
    <text evidence="2">Belongs to the CbbQ/NirQ/NorQ/GpvN family.</text>
</comment>
<feature type="chain" id="PRO_0000284806" description="Uncharacterized protein SACOL1445">
    <location>
        <begin position="1"/>
        <end position="263"/>
    </location>
</feature>
<feature type="binding site" evidence="1">
    <location>
        <begin position="31"/>
        <end position="38"/>
    </location>
    <ligand>
        <name>ATP</name>
        <dbReference type="ChEBI" id="CHEBI:30616"/>
    </ligand>
</feature>